<evidence type="ECO:0000255" key="1">
    <source>
        <dbReference type="HAMAP-Rule" id="MF_00531"/>
    </source>
</evidence>
<evidence type="ECO:0000305" key="2"/>
<protein>
    <recommendedName>
        <fullName evidence="1">Small ribosomal subunit protein uS19c</fullName>
    </recommendedName>
    <alternativeName>
        <fullName evidence="2">30S ribosomal protein S19, chloroplastic</fullName>
    </alternativeName>
</protein>
<sequence length="92" mass="10523">MTRSLKKNPFVANHLLRKINKLNTKAEKNLIVTWSRASTIIPTMIGHTIAIHNGKEHLPIYITDRMVGHKLGEFAPTLNFRGHAKNDNKSRR</sequence>
<accession>Q14F94</accession>
<dbReference type="EMBL" id="AP008956">
    <property type="protein sequence ID" value="BAE97268.1"/>
    <property type="molecule type" value="Genomic_DNA"/>
</dbReference>
<dbReference type="EMBL" id="AP008956">
    <property type="protein sequence ID" value="BAE97245.1"/>
    <property type="molecule type" value="Genomic_DNA"/>
</dbReference>
<dbReference type="RefSeq" id="YP_665598.1">
    <property type="nucleotide sequence ID" value="NC_008235.1"/>
</dbReference>
<dbReference type="RefSeq" id="YP_665620.1">
    <property type="nucleotide sequence ID" value="NC_008235.1"/>
</dbReference>
<dbReference type="SMR" id="Q14F94"/>
<dbReference type="GeneID" id="4178262"/>
<dbReference type="GeneID" id="4178263"/>
<dbReference type="KEGG" id="palz:4178262"/>
<dbReference type="KEGG" id="palz:4178263"/>
<dbReference type="OrthoDB" id="29772at3646"/>
<dbReference type="GO" id="GO:0009507">
    <property type="term" value="C:chloroplast"/>
    <property type="evidence" value="ECO:0007669"/>
    <property type="project" value="UniProtKB-SubCell"/>
</dbReference>
<dbReference type="GO" id="GO:0005763">
    <property type="term" value="C:mitochondrial small ribosomal subunit"/>
    <property type="evidence" value="ECO:0007669"/>
    <property type="project" value="TreeGrafter"/>
</dbReference>
<dbReference type="GO" id="GO:0019843">
    <property type="term" value="F:rRNA binding"/>
    <property type="evidence" value="ECO:0007669"/>
    <property type="project" value="UniProtKB-UniRule"/>
</dbReference>
<dbReference type="GO" id="GO:0003735">
    <property type="term" value="F:structural constituent of ribosome"/>
    <property type="evidence" value="ECO:0007669"/>
    <property type="project" value="InterPro"/>
</dbReference>
<dbReference type="GO" id="GO:0000028">
    <property type="term" value="P:ribosomal small subunit assembly"/>
    <property type="evidence" value="ECO:0007669"/>
    <property type="project" value="TreeGrafter"/>
</dbReference>
<dbReference type="GO" id="GO:0006412">
    <property type="term" value="P:translation"/>
    <property type="evidence" value="ECO:0007669"/>
    <property type="project" value="UniProtKB-UniRule"/>
</dbReference>
<dbReference type="FunFam" id="3.30.860.10:FF:000001">
    <property type="entry name" value="30S ribosomal protein S19"/>
    <property type="match status" value="1"/>
</dbReference>
<dbReference type="Gene3D" id="3.30.860.10">
    <property type="entry name" value="30s Ribosomal Protein S19, Chain A"/>
    <property type="match status" value="1"/>
</dbReference>
<dbReference type="HAMAP" id="MF_00531">
    <property type="entry name" value="Ribosomal_uS19"/>
    <property type="match status" value="1"/>
</dbReference>
<dbReference type="InterPro" id="IPR002222">
    <property type="entry name" value="Ribosomal_uS19"/>
</dbReference>
<dbReference type="InterPro" id="IPR005732">
    <property type="entry name" value="Ribosomal_uS19_bac-type"/>
</dbReference>
<dbReference type="InterPro" id="IPR020934">
    <property type="entry name" value="Ribosomal_uS19_CS"/>
</dbReference>
<dbReference type="InterPro" id="IPR023575">
    <property type="entry name" value="Ribosomal_uS19_SF"/>
</dbReference>
<dbReference type="NCBIfam" id="TIGR01050">
    <property type="entry name" value="rpsS_bact"/>
    <property type="match status" value="1"/>
</dbReference>
<dbReference type="PANTHER" id="PTHR11880">
    <property type="entry name" value="RIBOSOMAL PROTEIN S19P FAMILY MEMBER"/>
    <property type="match status" value="1"/>
</dbReference>
<dbReference type="PANTHER" id="PTHR11880:SF8">
    <property type="entry name" value="SMALL RIBOSOMAL SUBUNIT PROTEIN US19M"/>
    <property type="match status" value="1"/>
</dbReference>
<dbReference type="Pfam" id="PF00203">
    <property type="entry name" value="Ribosomal_S19"/>
    <property type="match status" value="1"/>
</dbReference>
<dbReference type="PIRSF" id="PIRSF002144">
    <property type="entry name" value="Ribosomal_S19"/>
    <property type="match status" value="1"/>
</dbReference>
<dbReference type="PRINTS" id="PR00975">
    <property type="entry name" value="RIBOSOMALS19"/>
</dbReference>
<dbReference type="SUPFAM" id="SSF54570">
    <property type="entry name" value="Ribosomal protein S19"/>
    <property type="match status" value="1"/>
</dbReference>
<dbReference type="PROSITE" id="PS00323">
    <property type="entry name" value="RIBOSOMAL_S19"/>
    <property type="match status" value="1"/>
</dbReference>
<reference key="1">
    <citation type="submission" date="2005-03" db="EMBL/GenBank/DDBJ databases">
        <title>Complete structure of the chloroplast genome of Populus alba.</title>
        <authorList>
            <person name="Okumura S."/>
            <person name="Yamashita A."/>
            <person name="Kanamoto H."/>
            <person name="Hattori M."/>
            <person name="Takase H."/>
            <person name="Tomizawa K."/>
        </authorList>
    </citation>
    <scope>NUCLEOTIDE SEQUENCE [LARGE SCALE GENOMIC DNA]</scope>
</reference>
<gene>
    <name evidence="1" type="primary">rps19</name>
</gene>
<geneLocation type="chloroplast"/>
<comment type="function">
    <text evidence="1">Protein S19 forms a complex with S13 that binds strongly to the 16S ribosomal RNA.</text>
</comment>
<comment type="subcellular location">
    <subcellularLocation>
        <location>Plastid</location>
        <location>Chloroplast</location>
    </subcellularLocation>
</comment>
<comment type="similarity">
    <text evidence="1">Belongs to the universal ribosomal protein uS19 family.</text>
</comment>
<keyword id="KW-0150">Chloroplast</keyword>
<keyword id="KW-0934">Plastid</keyword>
<keyword id="KW-0687">Ribonucleoprotein</keyword>
<keyword id="KW-0689">Ribosomal protein</keyword>
<keyword id="KW-0694">RNA-binding</keyword>
<keyword id="KW-0699">rRNA-binding</keyword>
<name>RR19_POPAL</name>
<proteinExistence type="inferred from homology"/>
<organism>
    <name type="scientific">Populus alba</name>
    <name type="common">White poplar</name>
    <dbReference type="NCBI Taxonomy" id="43335"/>
    <lineage>
        <taxon>Eukaryota</taxon>
        <taxon>Viridiplantae</taxon>
        <taxon>Streptophyta</taxon>
        <taxon>Embryophyta</taxon>
        <taxon>Tracheophyta</taxon>
        <taxon>Spermatophyta</taxon>
        <taxon>Magnoliopsida</taxon>
        <taxon>eudicotyledons</taxon>
        <taxon>Gunneridae</taxon>
        <taxon>Pentapetalae</taxon>
        <taxon>rosids</taxon>
        <taxon>fabids</taxon>
        <taxon>Malpighiales</taxon>
        <taxon>Salicaceae</taxon>
        <taxon>Saliceae</taxon>
        <taxon>Populus</taxon>
    </lineage>
</organism>
<feature type="chain" id="PRO_0000276920" description="Small ribosomal subunit protein uS19c">
    <location>
        <begin position="1"/>
        <end position="92"/>
    </location>
</feature>